<comment type="function">
    <text evidence="1">Control of topological states of DNA by transient breakage and subsequent rejoining of DNA strands. Topoisomerase II makes double-strand breaks (By similarity).</text>
</comment>
<comment type="catalytic activity">
    <reaction evidence="3">
        <text>ATP-dependent breakage, passage and rejoining of double-stranded DNA.</text>
        <dbReference type="EC" id="5.6.2.2"/>
    </reaction>
</comment>
<comment type="cofactor">
    <cofactor evidence="3">
        <name>Mg(2+)</name>
        <dbReference type="ChEBI" id="CHEBI:18420"/>
    </cofactor>
    <cofactor evidence="3">
        <name>Mn(2+)</name>
        <dbReference type="ChEBI" id="CHEBI:29035"/>
    </cofactor>
    <cofactor evidence="3">
        <name>Ca(2+)</name>
        <dbReference type="ChEBI" id="CHEBI:29108"/>
    </cofactor>
    <text evidence="3">Binds two Mg(2+) per subunit. The magnesium ions form salt bridges with both the protein and the DNA. Can also accept other divalent metal cations, such as Mn(2+) or Ca(2+).</text>
</comment>
<comment type="subunit">
    <text evidence="1">Homodimer.</text>
</comment>
<comment type="subcellular location">
    <subcellularLocation>
        <location evidence="6">Mitochondrion</location>
    </subcellularLocation>
</comment>
<comment type="developmental stage">
    <text evidence="6">Present in growth phase and during development, although levels declined as development proceeded.</text>
</comment>
<comment type="similarity">
    <text evidence="7">Belongs to the type II topoisomerase family.</text>
</comment>
<comment type="sequence caution" evidence="7">
    <conflict type="frameshift">
        <sequence resource="EMBL-CDS" id="BAA11510"/>
    </conflict>
</comment>
<reference key="1">
    <citation type="journal article" date="1997" name="Biochim. Biophys. Acta">
        <title>Cloning and characterization of the gene encoding a mitochondrially localized DNA topoisomerase II in Dictyostelium discoideum. Western blot analysis.</title>
        <authorList>
            <person name="Komori K."/>
            <person name="Kuroe K."/>
            <person name="Yanagisawa K."/>
            <person name="Tanaka Y."/>
        </authorList>
    </citation>
    <scope>NUCLEOTIDE SEQUENCE [GENOMIC DNA]</scope>
    <scope>SUBCELLULAR LOCATION</scope>
    <scope>DEVELOPMENTAL STAGE</scope>
    <source>
        <strain>AX3</strain>
    </source>
</reference>
<reference key="2">
    <citation type="journal article" date="2005" name="Nature">
        <title>The genome of the social amoeba Dictyostelium discoideum.</title>
        <authorList>
            <person name="Eichinger L."/>
            <person name="Pachebat J.A."/>
            <person name="Gloeckner G."/>
            <person name="Rajandream M.A."/>
            <person name="Sucgang R."/>
            <person name="Berriman M."/>
            <person name="Song J."/>
            <person name="Olsen R."/>
            <person name="Szafranski K."/>
            <person name="Xu Q."/>
            <person name="Tunggal B."/>
            <person name="Kummerfeld S."/>
            <person name="Madera M."/>
            <person name="Konfortov B.A."/>
            <person name="Rivero F."/>
            <person name="Bankier A.T."/>
            <person name="Lehmann R."/>
            <person name="Hamlin N."/>
            <person name="Davies R."/>
            <person name="Gaudet P."/>
            <person name="Fey P."/>
            <person name="Pilcher K."/>
            <person name="Chen G."/>
            <person name="Saunders D."/>
            <person name="Sodergren E.J."/>
            <person name="Davis P."/>
            <person name="Kerhornou A."/>
            <person name="Nie X."/>
            <person name="Hall N."/>
            <person name="Anjard C."/>
            <person name="Hemphill L."/>
            <person name="Bason N."/>
            <person name="Farbrother P."/>
            <person name="Desany B."/>
            <person name="Just E."/>
            <person name="Morio T."/>
            <person name="Rost R."/>
            <person name="Churcher C.M."/>
            <person name="Cooper J."/>
            <person name="Haydock S."/>
            <person name="van Driessche N."/>
            <person name="Cronin A."/>
            <person name="Goodhead I."/>
            <person name="Muzny D.M."/>
            <person name="Mourier T."/>
            <person name="Pain A."/>
            <person name="Lu M."/>
            <person name="Harper D."/>
            <person name="Lindsay R."/>
            <person name="Hauser H."/>
            <person name="James K.D."/>
            <person name="Quiles M."/>
            <person name="Madan Babu M."/>
            <person name="Saito T."/>
            <person name="Buchrieser C."/>
            <person name="Wardroper A."/>
            <person name="Felder M."/>
            <person name="Thangavelu M."/>
            <person name="Johnson D."/>
            <person name="Knights A."/>
            <person name="Loulseged H."/>
            <person name="Mungall K.L."/>
            <person name="Oliver K."/>
            <person name="Price C."/>
            <person name="Quail M.A."/>
            <person name="Urushihara H."/>
            <person name="Hernandez J."/>
            <person name="Rabbinowitsch E."/>
            <person name="Steffen D."/>
            <person name="Sanders M."/>
            <person name="Ma J."/>
            <person name="Kohara Y."/>
            <person name="Sharp S."/>
            <person name="Simmonds M.N."/>
            <person name="Spiegler S."/>
            <person name="Tivey A."/>
            <person name="Sugano S."/>
            <person name="White B."/>
            <person name="Walker D."/>
            <person name="Woodward J.R."/>
            <person name="Winckler T."/>
            <person name="Tanaka Y."/>
            <person name="Shaulsky G."/>
            <person name="Schleicher M."/>
            <person name="Weinstock G.M."/>
            <person name="Rosenthal A."/>
            <person name="Cox E.C."/>
            <person name="Chisholm R.L."/>
            <person name="Gibbs R.A."/>
            <person name="Loomis W.F."/>
            <person name="Platzer M."/>
            <person name="Kay R.R."/>
            <person name="Williams J.G."/>
            <person name="Dear P.H."/>
            <person name="Noegel A.A."/>
            <person name="Barrell B.G."/>
            <person name="Kuspa A."/>
        </authorList>
    </citation>
    <scope>NUCLEOTIDE SEQUENCE [LARGE SCALE GENOMIC DNA]</scope>
    <source>
        <strain>AX4</strain>
    </source>
</reference>
<proteinExistence type="evidence at transcript level"/>
<feature type="transit peptide" description="Mitochondrion" evidence="2">
    <location>
        <begin position="1"/>
        <end position="35"/>
    </location>
</feature>
<feature type="chain" id="PRO_0000034820" description="DNA topoisomerase 2, mitochondrial">
    <location>
        <begin position="36"/>
        <end position="1284"/>
    </location>
</feature>
<feature type="domain" description="Toprim" evidence="3">
    <location>
        <begin position="560"/>
        <end position="677"/>
    </location>
</feature>
<feature type="domain" description="Topo IIA-type catalytic" evidence="4">
    <location>
        <begin position="810"/>
        <end position="1232"/>
    </location>
</feature>
<feature type="region of interest" description="Interaction with DNA" evidence="1">
    <location>
        <begin position="445"/>
        <end position="447"/>
    </location>
</feature>
<feature type="region of interest" description="Disordered" evidence="5">
    <location>
        <begin position="1245"/>
        <end position="1284"/>
    </location>
</feature>
<feature type="compositionally biased region" description="Low complexity" evidence="5">
    <location>
        <begin position="1254"/>
        <end position="1271"/>
    </location>
</feature>
<feature type="active site" description="O-(5'-phospho-DNA)-tyrosine intermediate" evidence="4">
    <location>
        <position position="900"/>
    </location>
</feature>
<feature type="binding site" evidence="1">
    <location>
        <position position="183"/>
    </location>
    <ligand>
        <name>ATP</name>
        <dbReference type="ChEBI" id="CHEBI:30616"/>
    </ligand>
</feature>
<feature type="binding site" evidence="1">
    <location>
        <position position="212"/>
    </location>
    <ligand>
        <name>ATP</name>
        <dbReference type="ChEBI" id="CHEBI:30616"/>
    </ligand>
</feature>
<feature type="binding site" evidence="1">
    <location>
        <begin position="240"/>
        <end position="242"/>
    </location>
    <ligand>
        <name>ATP</name>
        <dbReference type="ChEBI" id="CHEBI:30616"/>
    </ligand>
</feature>
<feature type="binding site" evidence="1">
    <location>
        <begin position="253"/>
        <end position="260"/>
    </location>
    <ligand>
        <name>ATP</name>
        <dbReference type="ChEBI" id="CHEBI:30616"/>
    </ligand>
</feature>
<feature type="binding site" evidence="1">
    <location>
        <begin position="478"/>
        <end position="480"/>
    </location>
    <ligand>
        <name>ATP</name>
        <dbReference type="ChEBI" id="CHEBI:30616"/>
    </ligand>
</feature>
<feature type="binding site" evidence="3">
    <location>
        <position position="566"/>
    </location>
    <ligand>
        <name>Mg(2+)</name>
        <dbReference type="ChEBI" id="CHEBI:18420"/>
        <label>1</label>
        <note>catalytic</note>
    </ligand>
</feature>
<feature type="binding site" evidence="3">
    <location>
        <position position="646"/>
    </location>
    <ligand>
        <name>Mg(2+)</name>
        <dbReference type="ChEBI" id="CHEBI:18420"/>
        <label>1</label>
        <note>catalytic</note>
    </ligand>
</feature>
<feature type="binding site" evidence="3">
    <location>
        <position position="646"/>
    </location>
    <ligand>
        <name>Mg(2+)</name>
        <dbReference type="ChEBI" id="CHEBI:18420"/>
        <label>2</label>
    </ligand>
</feature>
<feature type="binding site" evidence="3">
    <location>
        <position position="648"/>
    </location>
    <ligand>
        <name>Mg(2+)</name>
        <dbReference type="ChEBI" id="CHEBI:18420"/>
        <label>2</label>
    </ligand>
</feature>
<feature type="site" description="Interaction with DNA" evidence="3">
    <location>
        <position position="594"/>
    </location>
</feature>
<feature type="site" description="Interaction with DNA" evidence="3">
    <location>
        <position position="597"/>
    </location>
</feature>
<feature type="site" description="Interaction with DNA" evidence="3">
    <location>
        <position position="768"/>
    </location>
</feature>
<feature type="site" description="Interaction with DNA" evidence="3">
    <location>
        <position position="818"/>
    </location>
</feature>
<feature type="site" description="Interaction with DNA" evidence="3">
    <location>
        <position position="852"/>
    </location>
</feature>
<feature type="site" description="Interaction with DNA" evidence="3">
    <location>
        <position position="858"/>
    </location>
</feature>
<feature type="site" description="Transition state stabilizer" evidence="1">
    <location>
        <position position="899"/>
    </location>
</feature>
<feature type="site" description="Important for DNA bending; intercalates between base pairs of target DNA" evidence="1">
    <location>
        <position position="951"/>
    </location>
</feature>
<feature type="sequence conflict" description="In Ref. 1; BAA11510." evidence="7" ref="1">
    <original>FTK</original>
    <variation>LQ</variation>
    <location>
        <begin position="902"/>
        <end position="904"/>
    </location>
</feature>
<accession>P90520</accession>
<accession>Q54WC7</accession>
<gene>
    <name type="primary">top2mt</name>
    <name type="synonym">topA</name>
    <name type="ORF">DDB_G0279737</name>
</gene>
<dbReference type="EC" id="5.6.2.2" evidence="3"/>
<dbReference type="EMBL" id="D82024">
    <property type="protein sequence ID" value="BAA11510.1"/>
    <property type="status" value="ALT_FRAME"/>
    <property type="molecule type" value="Genomic_DNA"/>
</dbReference>
<dbReference type="EMBL" id="AAFI02000032">
    <property type="protein sequence ID" value="EAL67548.1"/>
    <property type="molecule type" value="Genomic_DNA"/>
</dbReference>
<dbReference type="PIR" id="T30577">
    <property type="entry name" value="T30577"/>
</dbReference>
<dbReference type="RefSeq" id="XP_641531.1">
    <property type="nucleotide sequence ID" value="XM_636439.1"/>
</dbReference>
<dbReference type="SMR" id="P90520"/>
<dbReference type="FunCoup" id="P90520">
    <property type="interactions" value="4"/>
</dbReference>
<dbReference type="STRING" id="44689.P90520"/>
<dbReference type="PaxDb" id="44689-DDB0214907"/>
<dbReference type="EnsemblProtists" id="EAL67548">
    <property type="protein sequence ID" value="EAL67548"/>
    <property type="gene ID" value="DDB_G0279737"/>
</dbReference>
<dbReference type="GeneID" id="8622204"/>
<dbReference type="KEGG" id="ddi:DDB_G0279737"/>
<dbReference type="dictyBase" id="DDB_G0279737">
    <property type="gene designation" value="top2mt"/>
</dbReference>
<dbReference type="VEuPathDB" id="AmoebaDB:DDB_G0279737"/>
<dbReference type="eggNOG" id="KOG0355">
    <property type="taxonomic scope" value="Eukaryota"/>
</dbReference>
<dbReference type="HOGENOM" id="CLU_001935_1_0_1"/>
<dbReference type="InParanoid" id="P90520"/>
<dbReference type="OMA" id="NCYVVEM"/>
<dbReference type="PhylomeDB" id="P90520"/>
<dbReference type="Reactome" id="R-DDI-4615885">
    <property type="pathway name" value="SUMOylation of DNA replication proteins"/>
</dbReference>
<dbReference type="PRO" id="PR:P90520"/>
<dbReference type="Proteomes" id="UP000002195">
    <property type="component" value="Chromosome 3"/>
</dbReference>
<dbReference type="GO" id="GO:0005739">
    <property type="term" value="C:mitochondrion"/>
    <property type="evidence" value="ECO:0000314"/>
    <property type="project" value="dictyBase"/>
</dbReference>
<dbReference type="GO" id="GO:0005524">
    <property type="term" value="F:ATP binding"/>
    <property type="evidence" value="ECO:0007669"/>
    <property type="project" value="UniProtKB-KW"/>
</dbReference>
<dbReference type="GO" id="GO:0003677">
    <property type="term" value="F:DNA binding"/>
    <property type="evidence" value="ECO:0007669"/>
    <property type="project" value="UniProtKB-KW"/>
</dbReference>
<dbReference type="GO" id="GO:0003918">
    <property type="term" value="F:DNA topoisomerase type II (double strand cut, ATP-hydrolyzing) activity"/>
    <property type="evidence" value="ECO:0007669"/>
    <property type="project" value="UniProtKB-EC"/>
</dbReference>
<dbReference type="GO" id="GO:0046872">
    <property type="term" value="F:metal ion binding"/>
    <property type="evidence" value="ECO:0007669"/>
    <property type="project" value="UniProtKB-KW"/>
</dbReference>
<dbReference type="GO" id="GO:0006265">
    <property type="term" value="P:DNA topological change"/>
    <property type="evidence" value="ECO:0007669"/>
    <property type="project" value="InterPro"/>
</dbReference>
<dbReference type="GO" id="GO:0000712">
    <property type="term" value="P:resolution of meiotic recombination intermediates"/>
    <property type="evidence" value="ECO:0000318"/>
    <property type="project" value="GO_Central"/>
</dbReference>
<dbReference type="GO" id="GO:0000819">
    <property type="term" value="P:sister chromatid segregation"/>
    <property type="evidence" value="ECO:0000318"/>
    <property type="project" value="GO_Central"/>
</dbReference>
<dbReference type="CDD" id="cd16930">
    <property type="entry name" value="HATPase_TopII-like"/>
    <property type="match status" value="1"/>
</dbReference>
<dbReference type="CDD" id="cd00187">
    <property type="entry name" value="TOP4c"/>
    <property type="match status" value="1"/>
</dbReference>
<dbReference type="CDD" id="cd03481">
    <property type="entry name" value="TopoIIA_Trans_ScTopoIIA"/>
    <property type="match status" value="1"/>
</dbReference>
<dbReference type="CDD" id="cd03365">
    <property type="entry name" value="TOPRIM_TopoIIA"/>
    <property type="match status" value="1"/>
</dbReference>
<dbReference type="FunFam" id="1.10.268.10:FF:000025">
    <property type="match status" value="1"/>
</dbReference>
<dbReference type="FunFam" id="3.30.1360.40:FF:000003">
    <property type="entry name" value="DNA topoisomerase 2"/>
    <property type="match status" value="1"/>
</dbReference>
<dbReference type="FunFam" id="3.30.1490.30:FF:000001">
    <property type="entry name" value="DNA topoisomerase 2"/>
    <property type="match status" value="1"/>
</dbReference>
<dbReference type="FunFam" id="3.40.50.670:FF:000001">
    <property type="entry name" value="DNA topoisomerase 2"/>
    <property type="match status" value="1"/>
</dbReference>
<dbReference type="FunFam" id="3.90.199.10:FF:000002">
    <property type="entry name" value="DNA topoisomerase 2"/>
    <property type="match status" value="1"/>
</dbReference>
<dbReference type="Gene3D" id="3.30.1360.40">
    <property type="match status" value="1"/>
</dbReference>
<dbReference type="Gene3D" id="3.30.1490.30">
    <property type="match status" value="1"/>
</dbReference>
<dbReference type="Gene3D" id="3.30.230.10">
    <property type="match status" value="1"/>
</dbReference>
<dbReference type="Gene3D" id="3.40.50.670">
    <property type="match status" value="1"/>
</dbReference>
<dbReference type="Gene3D" id="3.30.565.10">
    <property type="entry name" value="Histidine kinase-like ATPase, C-terminal domain"/>
    <property type="match status" value="1"/>
</dbReference>
<dbReference type="Gene3D" id="3.90.199.10">
    <property type="entry name" value="Topoisomerase II, domain 5"/>
    <property type="match status" value="1"/>
</dbReference>
<dbReference type="Gene3D" id="1.10.268.10">
    <property type="entry name" value="Topoisomerase, domain 3"/>
    <property type="match status" value="1"/>
</dbReference>
<dbReference type="InterPro" id="IPR050634">
    <property type="entry name" value="DNA_Topoisomerase_II"/>
</dbReference>
<dbReference type="InterPro" id="IPR036890">
    <property type="entry name" value="HATPase_C_sf"/>
</dbReference>
<dbReference type="InterPro" id="IPR020568">
    <property type="entry name" value="Ribosomal_Su5_D2-typ_SF"/>
</dbReference>
<dbReference type="InterPro" id="IPR014721">
    <property type="entry name" value="Ribsml_uS5_D2-typ_fold_subgr"/>
</dbReference>
<dbReference type="InterPro" id="IPR001241">
    <property type="entry name" value="Topo_IIA"/>
</dbReference>
<dbReference type="InterPro" id="IPR013760">
    <property type="entry name" value="Topo_IIA-like_dom_sf"/>
</dbReference>
<dbReference type="InterPro" id="IPR013758">
    <property type="entry name" value="Topo_IIA_A/C_ab"/>
</dbReference>
<dbReference type="InterPro" id="IPR013757">
    <property type="entry name" value="Topo_IIA_A_a_sf"/>
</dbReference>
<dbReference type="InterPro" id="IPR013759">
    <property type="entry name" value="Topo_IIA_B_C"/>
</dbReference>
<dbReference type="InterPro" id="IPR013506">
    <property type="entry name" value="Topo_IIA_bsu_dom2"/>
</dbReference>
<dbReference type="InterPro" id="IPR002205">
    <property type="entry name" value="Topo_IIA_dom_A"/>
</dbReference>
<dbReference type="InterPro" id="IPR001154">
    <property type="entry name" value="TopoII_euk"/>
</dbReference>
<dbReference type="InterPro" id="IPR018522">
    <property type="entry name" value="TopoIIA_CS"/>
</dbReference>
<dbReference type="InterPro" id="IPR031660">
    <property type="entry name" value="TOPRIM_C"/>
</dbReference>
<dbReference type="InterPro" id="IPR006171">
    <property type="entry name" value="TOPRIM_dom"/>
</dbReference>
<dbReference type="InterPro" id="IPR034157">
    <property type="entry name" value="TOPRIM_TopoII"/>
</dbReference>
<dbReference type="PANTHER" id="PTHR10169:SF49">
    <property type="entry name" value="DNA TOPOISOMERASE 2, MITOCHONDRIAL"/>
    <property type="match status" value="1"/>
</dbReference>
<dbReference type="PANTHER" id="PTHR10169">
    <property type="entry name" value="DNA TOPOISOMERASE/GYRASE"/>
    <property type="match status" value="1"/>
</dbReference>
<dbReference type="Pfam" id="PF00204">
    <property type="entry name" value="DNA_gyraseB"/>
    <property type="match status" value="1"/>
</dbReference>
<dbReference type="Pfam" id="PF00521">
    <property type="entry name" value="DNA_topoisoIV"/>
    <property type="match status" value="1"/>
</dbReference>
<dbReference type="Pfam" id="PF01751">
    <property type="entry name" value="Toprim"/>
    <property type="match status" value="1"/>
</dbReference>
<dbReference type="Pfam" id="PF16898">
    <property type="entry name" value="TOPRIM_C"/>
    <property type="match status" value="1"/>
</dbReference>
<dbReference type="PRINTS" id="PR01158">
    <property type="entry name" value="TOPISMRASEII"/>
</dbReference>
<dbReference type="PRINTS" id="PR00418">
    <property type="entry name" value="TPI2FAMILY"/>
</dbReference>
<dbReference type="SMART" id="SM00433">
    <property type="entry name" value="TOP2c"/>
    <property type="match status" value="1"/>
</dbReference>
<dbReference type="SMART" id="SM00434">
    <property type="entry name" value="TOP4c"/>
    <property type="match status" value="1"/>
</dbReference>
<dbReference type="SUPFAM" id="SSF55874">
    <property type="entry name" value="ATPase domain of HSP90 chaperone/DNA topoisomerase II/histidine kinase"/>
    <property type="match status" value="1"/>
</dbReference>
<dbReference type="SUPFAM" id="SSF54211">
    <property type="entry name" value="Ribosomal protein S5 domain 2-like"/>
    <property type="match status" value="1"/>
</dbReference>
<dbReference type="SUPFAM" id="SSF56719">
    <property type="entry name" value="Type II DNA topoisomerase"/>
    <property type="match status" value="1"/>
</dbReference>
<dbReference type="PROSITE" id="PS52040">
    <property type="entry name" value="TOPO_IIA"/>
    <property type="match status" value="1"/>
</dbReference>
<dbReference type="PROSITE" id="PS00177">
    <property type="entry name" value="TOPOISOMERASE_II"/>
    <property type="match status" value="1"/>
</dbReference>
<dbReference type="PROSITE" id="PS50880">
    <property type="entry name" value="TOPRIM"/>
    <property type="match status" value="1"/>
</dbReference>
<sequence>MSKLLNNNNHKNLTNYLKFGKGIINNLNNKSKQVGIISFISQSSIQSQSSIQSQSFLSINNNSNNKYFSTKLNKNEKISEKTTTRKIEDIYQKKTPTEHVLLRPDSYIGTIEKIEDDMWVLSNSMFNKEKKTIELNNDNNEKNVESTTTTTTKTNKKPLTYIHPIKATYIPGLLKIYDEILVNAADNKKRDSKMSFIKVEINPNENSISIMNDGKGIPVVMHQTENCYVVEMVMGNLMSGSNFNDSELKVVGGRNGFGAKLTNIFSKEFTVETVDKSSGKKYFQRWSNNMGDRSEPIITPIGEGESDYTKITFKPDLEKFKIKSLWDDNILQLMERRLYDIAGCNTELMVTLNGKRLNYNFQSYVKLYEHHLNNSTKREDNEEQYREESFEFGEISPRWKIGIGLSETGQFTQVSFVNSINTVKGGTHVNFLADQIVRYVGEKLKKKHSDLEIRPMNIKHHLALFVNCLVDNPSFDSQSKETLTTKPMLFGSTPEIPESLLAQFVKNSKIIERVAGWALMKQKADLIHSTSGRQSKTTLIKSISKLDDANWAGGLKSKECTLIITEGDSAKSLALAGLSVVGRNSYGVFPLRGKLLNVRDVASKQLLSNEEINNLTTILGLSHKNSYDTDESMEDLRYGRVMIMADQDHDGSHIKGLVMNFIHYFWPNLLKRGFLVEFVTPIIKATKSSTQKKSFFTIKDYEKWRETISSDQLKQYTIKYYKGLGTSTSAEAKEYFSNLDKHVIKFIWGDEADDLIKMAFAKDLSSLRQRWIKETDMSQGIDHSIKEITYPDFINKELIHYSWAANLRSIPSLIDGLKPGQRKILFASFKRRLTNEIKVSQLSGYVAEQTSYHHGEQSLNSTIVKMAHNFVGSNNLPLLTPSGQFGTRLQGGSDSASARYIFTKLEPVARYLFNELDDPLLNYLEEEGESIQPDYYIPIIPMLLVNGSEGIGVGMSTSIPLFSPIDIIDQLMLRLNNQVALKKLIPWYRGFKGTISPDRHTYRTNGVIKLVGRNLEITELPIGRWTSDYKEVLNDLIDKDVIKSFQESNTENSVHFTILLNNNQLEQMEDLTENELIKLFKLSASLNFHLTCFDENSKIQKLESVEEIIDQFYKVRLQFYGKRREYLLKSLDNQIKRLTTTIQFLEVIASGKLKIQGRSKQDLIKELESGEIVGFENFGTHPPEVYQHLFSLSILDITKERIDNLTNQLTKRKSEHQSISSSDPKSLWTADLQQLKEYLEKSDKEFQKKPLKTSSSSSFDVSSSSESAKLSSTRKSKTDKIKSK</sequence>
<name>TOP2M_DICDI</name>
<protein>
    <recommendedName>
        <fullName>DNA topoisomerase 2, mitochondrial</fullName>
        <shortName>DNA topoisomerase II</shortName>
        <ecNumber evidence="3">5.6.2.2</ecNumber>
    </recommendedName>
</protein>
<keyword id="KW-0067">ATP-binding</keyword>
<keyword id="KW-0238">DNA-binding</keyword>
<keyword id="KW-0413">Isomerase</keyword>
<keyword id="KW-0460">Magnesium</keyword>
<keyword id="KW-0479">Metal-binding</keyword>
<keyword id="KW-0496">Mitochondrion</keyword>
<keyword id="KW-0547">Nucleotide-binding</keyword>
<keyword id="KW-1185">Reference proteome</keyword>
<keyword id="KW-0799">Topoisomerase</keyword>
<keyword id="KW-0809">Transit peptide</keyword>
<organism>
    <name type="scientific">Dictyostelium discoideum</name>
    <name type="common">Social amoeba</name>
    <dbReference type="NCBI Taxonomy" id="44689"/>
    <lineage>
        <taxon>Eukaryota</taxon>
        <taxon>Amoebozoa</taxon>
        <taxon>Evosea</taxon>
        <taxon>Eumycetozoa</taxon>
        <taxon>Dictyostelia</taxon>
        <taxon>Dictyosteliales</taxon>
        <taxon>Dictyosteliaceae</taxon>
        <taxon>Dictyostelium</taxon>
    </lineage>
</organism>
<evidence type="ECO:0000250" key="1"/>
<evidence type="ECO:0000255" key="2"/>
<evidence type="ECO:0000255" key="3">
    <source>
        <dbReference type="PROSITE-ProRule" id="PRU00995"/>
    </source>
</evidence>
<evidence type="ECO:0000255" key="4">
    <source>
        <dbReference type="PROSITE-ProRule" id="PRU01384"/>
    </source>
</evidence>
<evidence type="ECO:0000256" key="5">
    <source>
        <dbReference type="SAM" id="MobiDB-lite"/>
    </source>
</evidence>
<evidence type="ECO:0000269" key="6">
    <source>
    </source>
</evidence>
<evidence type="ECO:0000305" key="7"/>